<gene>
    <name evidence="6" type="primary">FUS6</name>
    <name type="ORF">FFUJ_10053</name>
</gene>
<comment type="function">
    <text evidence="5">Efflux pump; part of the gene cluster that mediates the biosynthesis of the mycotoxin fusarin C (PubMed:23932525). Within the cluster, FUS1, FUS2, FUS8 and FUS9 are sufficient for fusarin production (PubMed:23932525). The other FUS cluster members are not essential for fusarin C biosynthesis (PubMed:23932525).</text>
</comment>
<comment type="subcellular location">
    <subcellularLocation>
        <location evidence="1">Membrane</location>
        <topology evidence="1">Multi-pass membrane protein</topology>
    </subcellularLocation>
</comment>
<comment type="induction">
    <text evidence="4 5">Expressed under high amounts of nitrogen via regulation by GLN1 (PubMed:23932525). Moreover, components of the fungal-specific velvet complex VEL1, VEL2 and LAE1 act also as positive regulators of expression (PubMed:20572938, PubMed:23932525). Finally, expression is induced under acidic conditions in a PACC-independent manner (PubMed:23932525).</text>
</comment>
<comment type="disruption phenotype">
    <text evidence="5">Does not alter fusarin C production (PubMed:23932525).</text>
</comment>
<comment type="similarity">
    <text evidence="7">Belongs to the major facilitator superfamily. TCR/Tet family.</text>
</comment>
<protein>
    <recommendedName>
        <fullName evidence="6">Efflux pump FUS6</fullName>
    </recommendedName>
    <alternativeName>
        <fullName evidence="6">Fusarin biosynthesis protein 6</fullName>
    </alternativeName>
</protein>
<proteinExistence type="evidence at transcript level"/>
<dbReference type="EMBL" id="HF679031">
    <property type="protein sequence ID" value="CCT73265.1"/>
    <property type="molecule type" value="Genomic_DNA"/>
</dbReference>
<dbReference type="SMR" id="S0EEY7"/>
<dbReference type="GlyCosmos" id="S0EEY7">
    <property type="glycosylation" value="3 sites, No reported glycans"/>
</dbReference>
<dbReference type="EnsemblFungi" id="CCT73265">
    <property type="protein sequence ID" value="CCT73265"/>
    <property type="gene ID" value="FFUJ_10053"/>
</dbReference>
<dbReference type="VEuPathDB" id="FungiDB:FFUJ_10053"/>
<dbReference type="HOGENOM" id="CLU_000960_22_0_1"/>
<dbReference type="Proteomes" id="UP000016800">
    <property type="component" value="Chromosome 9"/>
</dbReference>
<dbReference type="GO" id="GO:0005886">
    <property type="term" value="C:plasma membrane"/>
    <property type="evidence" value="ECO:0007669"/>
    <property type="project" value="TreeGrafter"/>
</dbReference>
<dbReference type="GO" id="GO:0022857">
    <property type="term" value="F:transmembrane transporter activity"/>
    <property type="evidence" value="ECO:0007669"/>
    <property type="project" value="InterPro"/>
</dbReference>
<dbReference type="CDD" id="cd17502">
    <property type="entry name" value="MFS_Azr1_MDR_like"/>
    <property type="match status" value="1"/>
</dbReference>
<dbReference type="FunFam" id="1.20.1250.20:FF:000484">
    <property type="entry name" value="MFS general substrate transporter"/>
    <property type="match status" value="1"/>
</dbReference>
<dbReference type="Gene3D" id="1.20.1250.20">
    <property type="entry name" value="MFS general substrate transporter like domains"/>
    <property type="match status" value="1"/>
</dbReference>
<dbReference type="Gene3D" id="1.20.1720.10">
    <property type="entry name" value="Multidrug resistance protein D"/>
    <property type="match status" value="1"/>
</dbReference>
<dbReference type="InterPro" id="IPR011701">
    <property type="entry name" value="MFS"/>
</dbReference>
<dbReference type="InterPro" id="IPR020846">
    <property type="entry name" value="MFS_dom"/>
</dbReference>
<dbReference type="InterPro" id="IPR036259">
    <property type="entry name" value="MFS_trans_sf"/>
</dbReference>
<dbReference type="PANTHER" id="PTHR23501">
    <property type="entry name" value="MAJOR FACILITATOR SUPERFAMILY"/>
    <property type="match status" value="1"/>
</dbReference>
<dbReference type="PANTHER" id="PTHR23501:SF187">
    <property type="entry name" value="MAJOR FACILITATOR SUPERFAMILY (MFS) PROFILE DOMAIN-CONTAINING PROTEIN"/>
    <property type="match status" value="1"/>
</dbReference>
<dbReference type="Pfam" id="PF07690">
    <property type="entry name" value="MFS_1"/>
    <property type="match status" value="1"/>
</dbReference>
<dbReference type="PRINTS" id="PR01036">
    <property type="entry name" value="TCRTETB"/>
</dbReference>
<dbReference type="SUPFAM" id="SSF103473">
    <property type="entry name" value="MFS general substrate transporter"/>
    <property type="match status" value="1"/>
</dbReference>
<dbReference type="PROSITE" id="PS50850">
    <property type="entry name" value="MFS"/>
    <property type="match status" value="1"/>
</dbReference>
<reference key="1">
    <citation type="journal article" date="2013" name="PLoS Pathog.">
        <title>Deciphering the cryptic genome: genome-wide analyses of the rice pathogen Fusarium fujikuroi reveal complex regulation of secondary metabolism and novel metabolites.</title>
        <authorList>
            <person name="Wiemann P."/>
            <person name="Sieber C.M.K."/>
            <person name="von Bargen K.W."/>
            <person name="Studt L."/>
            <person name="Niehaus E.-M."/>
            <person name="Espino J.J."/>
            <person name="Huss K."/>
            <person name="Michielse C.B."/>
            <person name="Albermann S."/>
            <person name="Wagner D."/>
            <person name="Bergner S.V."/>
            <person name="Connolly L.R."/>
            <person name="Fischer A."/>
            <person name="Reuter G."/>
            <person name="Kleigrewe K."/>
            <person name="Bald T."/>
            <person name="Wingfield B.D."/>
            <person name="Ophir R."/>
            <person name="Freeman S."/>
            <person name="Hippler M."/>
            <person name="Smith K.M."/>
            <person name="Brown D.W."/>
            <person name="Proctor R.H."/>
            <person name="Muensterkoetter M."/>
            <person name="Freitag M."/>
            <person name="Humpf H.-U."/>
            <person name="Gueldener U."/>
            <person name="Tudzynski B."/>
        </authorList>
    </citation>
    <scope>NUCLEOTIDE SEQUENCE [LARGE SCALE GENOMIC DNA]</scope>
    <source>
        <strain>CBS 195.34 / IMI 58289 / NRRL A-6831</strain>
    </source>
</reference>
<reference key="2">
    <citation type="journal article" date="2010" name="Mol. Microbiol.">
        <title>FfVel1 and FfLae1, components of a velvet-like complex in Fusarium fujikuroi, affect differentiation, secondary metabolism and virulence.</title>
        <authorList>
            <person name="Wiemann P."/>
            <person name="Brown D.W."/>
            <person name="Kleigrewe K."/>
            <person name="Bok J.W."/>
            <person name="Keller N.P."/>
            <person name="Humpf H.U."/>
            <person name="Tudzynski B."/>
        </authorList>
    </citation>
    <scope>INDUCTION</scope>
</reference>
<reference key="3">
    <citation type="journal article" date="2013" name="Chem. Biol.">
        <title>Genetic manipulation of the Fusarium fujikuroi fusarin gene cluster yields insight into the complex regulation and fusarin biosynthetic pathway.</title>
        <authorList>
            <person name="Niehaus E.M."/>
            <person name="Kleigrewe K."/>
            <person name="Wiemann P."/>
            <person name="Studt L."/>
            <person name="Sieber C.M."/>
            <person name="Connolly L.R."/>
            <person name="Freitag M."/>
            <person name="Gueldener U."/>
            <person name="Tudzynski B."/>
            <person name="Humpf H.U."/>
        </authorList>
    </citation>
    <scope>FUNCTION</scope>
    <scope>INDUCTION</scope>
    <scope>DISRUPTION PHENOTYPE</scope>
</reference>
<organism>
    <name type="scientific">Gibberella fujikuroi (strain CBS 195.34 / IMI 58289 / NRRL A-6831)</name>
    <name type="common">Bakanae and foot rot disease fungus</name>
    <name type="synonym">Fusarium fujikuroi</name>
    <dbReference type="NCBI Taxonomy" id="1279085"/>
    <lineage>
        <taxon>Eukaryota</taxon>
        <taxon>Fungi</taxon>
        <taxon>Dikarya</taxon>
        <taxon>Ascomycota</taxon>
        <taxon>Pezizomycotina</taxon>
        <taxon>Sordariomycetes</taxon>
        <taxon>Hypocreomycetidae</taxon>
        <taxon>Hypocreales</taxon>
        <taxon>Nectriaceae</taxon>
        <taxon>Fusarium</taxon>
        <taxon>Fusarium fujikuroi species complex</taxon>
    </lineage>
</organism>
<name>FUS6_GIBF5</name>
<accession>S0EEY7</accession>
<evidence type="ECO:0000255" key="1"/>
<evidence type="ECO:0000255" key="2">
    <source>
        <dbReference type="PROSITE-ProRule" id="PRU00498"/>
    </source>
</evidence>
<evidence type="ECO:0000256" key="3">
    <source>
        <dbReference type="SAM" id="MobiDB-lite"/>
    </source>
</evidence>
<evidence type="ECO:0000269" key="4">
    <source>
    </source>
</evidence>
<evidence type="ECO:0000269" key="5">
    <source>
    </source>
</evidence>
<evidence type="ECO:0000303" key="6">
    <source>
    </source>
</evidence>
<evidence type="ECO:0000305" key="7"/>
<keyword id="KW-0325">Glycoprotein</keyword>
<keyword id="KW-0472">Membrane</keyword>
<keyword id="KW-1185">Reference proteome</keyword>
<keyword id="KW-0812">Transmembrane</keyword>
<keyword id="KW-1133">Transmembrane helix</keyword>
<keyword id="KW-0813">Transport</keyword>
<sequence length="555" mass="59538">MASAKDAQPAPEKSLSSDPQPEPSKKGARFWLIFVAISLTTFLAALDTSIISTALPTITADLGSESLYVWIIDAYLLASTATIPIFAQAANIYGRRSLTLIAVCIFTLGSGLCGGAHNTAMMVGGRAVQGIGGGGILTMSEIVVCDMVSIRERGMYAGIIGGVWAIAAVVAPVMGGAFAQNISWRWIFYINLPIAGVSLVALGLFLKLSRPPSGTFKEQMSRIDWGGSVLLIGSVTSIVLALSWGGSEHPWSGWQTIVPLVIGLLALVAFFAYQGAPWLREPTMPLRLFSNRTSSTLLVISFIHSLLLYWICYFLPVYFQAVKEASPTRSAVMLFPIACTSAPAGVAAGITITKTGKYRVWHFTGFVLMSIACGLFTLLDAQSSTGRWVGFQILFGVGTGTVFTSTLPPILASLPDSDVATATGAWTFIRNFGSIWGVAIPAAVFNNHVNHAAPKISDSSVKSLLVDGGAYEHATQHFIKSLSPNPDLKTQVIQVYLEGLKVVWQVSLAFCLLGFILCFFVRSLTLRDELNTEFGLKEEKPNSNNMSSEEGVVRD</sequence>
<feature type="chain" id="PRO_0000437359" description="Efflux pump FUS6">
    <location>
        <begin position="1"/>
        <end position="555"/>
    </location>
</feature>
<feature type="transmembrane region" description="Helical" evidence="1">
    <location>
        <begin position="31"/>
        <end position="51"/>
    </location>
</feature>
<feature type="transmembrane region" description="Helical" evidence="1">
    <location>
        <begin position="67"/>
        <end position="87"/>
    </location>
</feature>
<feature type="transmembrane region" description="Helical" evidence="1">
    <location>
        <begin position="97"/>
        <end position="117"/>
    </location>
</feature>
<feature type="transmembrane region" description="Helical" evidence="1">
    <location>
        <begin position="130"/>
        <end position="150"/>
    </location>
</feature>
<feature type="transmembrane region" description="Helical" evidence="1">
    <location>
        <begin position="159"/>
        <end position="179"/>
    </location>
</feature>
<feature type="transmembrane region" description="Helical" evidence="1">
    <location>
        <begin position="186"/>
        <end position="206"/>
    </location>
</feature>
<feature type="transmembrane region" description="Helical" evidence="1">
    <location>
        <begin position="225"/>
        <end position="245"/>
    </location>
</feature>
<feature type="transmembrane region" description="Helical" evidence="1">
    <location>
        <begin position="253"/>
        <end position="273"/>
    </location>
</feature>
<feature type="transmembrane region" description="Helical" evidence="1">
    <location>
        <begin position="297"/>
        <end position="317"/>
    </location>
</feature>
<feature type="transmembrane region" description="Helical" evidence="1">
    <location>
        <begin position="332"/>
        <end position="352"/>
    </location>
</feature>
<feature type="transmembrane region" description="Helical" evidence="1">
    <location>
        <begin position="360"/>
        <end position="380"/>
    </location>
</feature>
<feature type="transmembrane region" description="Helical" evidence="1">
    <location>
        <begin position="393"/>
        <end position="413"/>
    </location>
</feature>
<feature type="transmembrane region" description="Helical" evidence="1">
    <location>
        <begin position="425"/>
        <end position="445"/>
    </location>
</feature>
<feature type="transmembrane region" description="Helical" evidence="1">
    <location>
        <begin position="501"/>
        <end position="521"/>
    </location>
</feature>
<feature type="region of interest" description="Disordered" evidence="3">
    <location>
        <begin position="1"/>
        <end position="23"/>
    </location>
</feature>
<feature type="glycosylation site" description="N-linked (GlcNAc...) asparagine" evidence="2">
    <location>
        <position position="181"/>
    </location>
</feature>
<feature type="glycosylation site" description="N-linked (GlcNAc...) asparagine" evidence="2">
    <location>
        <position position="291"/>
    </location>
</feature>
<feature type="glycosylation site" description="N-linked (GlcNAc...) asparagine" evidence="2">
    <location>
        <position position="545"/>
    </location>
</feature>